<accession>B2G5W8</accession>
<comment type="function">
    <text evidence="1">Catalyzes the NADPH-dependent reduction of L-glutamate 5-phosphate into L-glutamate 5-semialdehyde and phosphate. The product spontaneously undergoes cyclization to form 1-pyrroline-5-carboxylate.</text>
</comment>
<comment type="catalytic activity">
    <reaction evidence="1">
        <text>L-glutamate 5-semialdehyde + phosphate + NADP(+) = L-glutamyl 5-phosphate + NADPH + H(+)</text>
        <dbReference type="Rhea" id="RHEA:19541"/>
        <dbReference type="ChEBI" id="CHEBI:15378"/>
        <dbReference type="ChEBI" id="CHEBI:43474"/>
        <dbReference type="ChEBI" id="CHEBI:57783"/>
        <dbReference type="ChEBI" id="CHEBI:58066"/>
        <dbReference type="ChEBI" id="CHEBI:58274"/>
        <dbReference type="ChEBI" id="CHEBI:58349"/>
        <dbReference type="EC" id="1.2.1.41"/>
    </reaction>
</comment>
<comment type="pathway">
    <text evidence="1">Amino-acid biosynthesis; L-proline biosynthesis; L-glutamate 5-semialdehyde from L-glutamate: step 2/2.</text>
</comment>
<comment type="subcellular location">
    <subcellularLocation>
        <location evidence="1">Cytoplasm</location>
    </subcellularLocation>
</comment>
<comment type="similarity">
    <text evidence="1">Belongs to the gamma-glutamyl phosphate reductase family.</text>
</comment>
<name>PROA_LIMRJ</name>
<sequence length="414" mass="45255">MNQDLIAIGKRAQNAANKLALMNTATKNKALLQLADDLIKNKNQIIAANQQDLAAATQMPTKFTDRLMVNSQRIADMANGLRTIADLNDPTSQIDKGWITKDGLQILQRRVPLGVIGIIFEARPNVTVDATGLTFKSGNAVILRGGKEAIQTNTALVKILRESLQSQHLPVDAVQLITDTSHAIADEMMNLTDYIDVLIPRGGRALIQRVVTTATVPVIETGAGNCHIYIDKDADLTMATNITVNAKVQRPSVCNAAEKLLIHRDIAAKFLPVIAKALMEHGVQLRGDETACQLVSTIRPVTEEDWDTEYNDLIMAVKIVDSLDDAISHINHYSTHHSESIITNNITRGRYFQQAINSACVYVNASTRFTDGGEFGFGAEIGISTQKLHARGPMGLQQLTTIKYEITGNGQIRK</sequence>
<reference key="1">
    <citation type="journal article" date="2008" name="DNA Res.">
        <title>Comparative genome analysis of Lactobacillus reuteri and Lactobacillus fermentum reveal a genomic island for reuterin and cobalamin production.</title>
        <authorList>
            <person name="Morita H."/>
            <person name="Toh H."/>
            <person name="Fukuda S."/>
            <person name="Horikawa H."/>
            <person name="Oshima K."/>
            <person name="Suzuki T."/>
            <person name="Murakami M."/>
            <person name="Hisamatsu S."/>
            <person name="Kato Y."/>
            <person name="Takizawa T."/>
            <person name="Fukuoka H."/>
            <person name="Yoshimura T."/>
            <person name="Itoh K."/>
            <person name="O'Sullivan D.J."/>
            <person name="McKay L.L."/>
            <person name="Ohno H."/>
            <person name="Kikuchi J."/>
            <person name="Masaoka T."/>
            <person name="Hattori M."/>
        </authorList>
    </citation>
    <scope>NUCLEOTIDE SEQUENCE [LARGE SCALE GENOMIC DNA]</scope>
    <source>
        <strain>JCM 1112</strain>
    </source>
</reference>
<feature type="chain" id="PRO_1000193617" description="Gamma-glutamyl phosphate reductase">
    <location>
        <begin position="1"/>
        <end position="414"/>
    </location>
</feature>
<gene>
    <name evidence="1" type="primary">proA</name>
    <name type="ordered locus">LAR_0334</name>
</gene>
<proteinExistence type="inferred from homology"/>
<organism>
    <name type="scientific">Limosilactobacillus reuteri subsp. reuteri (strain JCM 1112)</name>
    <name type="common">Lactobacillus reuteri</name>
    <dbReference type="NCBI Taxonomy" id="557433"/>
    <lineage>
        <taxon>Bacteria</taxon>
        <taxon>Bacillati</taxon>
        <taxon>Bacillota</taxon>
        <taxon>Bacilli</taxon>
        <taxon>Lactobacillales</taxon>
        <taxon>Lactobacillaceae</taxon>
        <taxon>Limosilactobacillus</taxon>
    </lineage>
</organism>
<dbReference type="EC" id="1.2.1.41" evidence="1"/>
<dbReference type="EMBL" id="AP007281">
    <property type="protein sequence ID" value="BAG24850.1"/>
    <property type="molecule type" value="Genomic_DNA"/>
</dbReference>
<dbReference type="RefSeq" id="WP_011953397.1">
    <property type="nucleotide sequence ID" value="NC_010609.1"/>
</dbReference>
<dbReference type="SMR" id="B2G5W8"/>
<dbReference type="KEGG" id="lrf:LAR_0334"/>
<dbReference type="HOGENOM" id="CLU_030231_0_0_9"/>
<dbReference type="UniPathway" id="UPA00098">
    <property type="reaction ID" value="UER00360"/>
</dbReference>
<dbReference type="GO" id="GO:0005737">
    <property type="term" value="C:cytoplasm"/>
    <property type="evidence" value="ECO:0007669"/>
    <property type="project" value="UniProtKB-SubCell"/>
</dbReference>
<dbReference type="GO" id="GO:0004350">
    <property type="term" value="F:glutamate-5-semialdehyde dehydrogenase activity"/>
    <property type="evidence" value="ECO:0007669"/>
    <property type="project" value="UniProtKB-UniRule"/>
</dbReference>
<dbReference type="GO" id="GO:0050661">
    <property type="term" value="F:NADP binding"/>
    <property type="evidence" value="ECO:0007669"/>
    <property type="project" value="InterPro"/>
</dbReference>
<dbReference type="GO" id="GO:0055129">
    <property type="term" value="P:L-proline biosynthetic process"/>
    <property type="evidence" value="ECO:0007669"/>
    <property type="project" value="UniProtKB-UniRule"/>
</dbReference>
<dbReference type="CDD" id="cd07079">
    <property type="entry name" value="ALDH_F18-19_ProA-GPR"/>
    <property type="match status" value="1"/>
</dbReference>
<dbReference type="FunFam" id="3.40.309.10:FF:000006">
    <property type="entry name" value="Gamma-glutamyl phosphate reductase"/>
    <property type="match status" value="1"/>
</dbReference>
<dbReference type="Gene3D" id="3.40.605.10">
    <property type="entry name" value="Aldehyde Dehydrogenase, Chain A, domain 1"/>
    <property type="match status" value="1"/>
</dbReference>
<dbReference type="Gene3D" id="3.40.309.10">
    <property type="entry name" value="Aldehyde Dehydrogenase, Chain A, domain 2"/>
    <property type="match status" value="1"/>
</dbReference>
<dbReference type="HAMAP" id="MF_00412">
    <property type="entry name" value="ProA"/>
    <property type="match status" value="1"/>
</dbReference>
<dbReference type="InterPro" id="IPR016161">
    <property type="entry name" value="Ald_DH/histidinol_DH"/>
</dbReference>
<dbReference type="InterPro" id="IPR016163">
    <property type="entry name" value="Ald_DH_C"/>
</dbReference>
<dbReference type="InterPro" id="IPR016162">
    <property type="entry name" value="Ald_DH_N"/>
</dbReference>
<dbReference type="InterPro" id="IPR015590">
    <property type="entry name" value="Aldehyde_DH_dom"/>
</dbReference>
<dbReference type="InterPro" id="IPR020593">
    <property type="entry name" value="G-glutamylP_reductase_CS"/>
</dbReference>
<dbReference type="InterPro" id="IPR012134">
    <property type="entry name" value="Glu-5-SA_DH"/>
</dbReference>
<dbReference type="InterPro" id="IPR000965">
    <property type="entry name" value="GPR_dom"/>
</dbReference>
<dbReference type="NCBIfam" id="NF001221">
    <property type="entry name" value="PRK00197.1"/>
    <property type="match status" value="1"/>
</dbReference>
<dbReference type="NCBIfam" id="TIGR00407">
    <property type="entry name" value="proA"/>
    <property type="match status" value="1"/>
</dbReference>
<dbReference type="PANTHER" id="PTHR11063:SF8">
    <property type="entry name" value="DELTA-1-PYRROLINE-5-CARBOXYLATE SYNTHASE"/>
    <property type="match status" value="1"/>
</dbReference>
<dbReference type="PANTHER" id="PTHR11063">
    <property type="entry name" value="GLUTAMATE SEMIALDEHYDE DEHYDROGENASE"/>
    <property type="match status" value="1"/>
</dbReference>
<dbReference type="Pfam" id="PF00171">
    <property type="entry name" value="Aldedh"/>
    <property type="match status" value="1"/>
</dbReference>
<dbReference type="PIRSF" id="PIRSF000151">
    <property type="entry name" value="GPR"/>
    <property type="match status" value="1"/>
</dbReference>
<dbReference type="SUPFAM" id="SSF53720">
    <property type="entry name" value="ALDH-like"/>
    <property type="match status" value="1"/>
</dbReference>
<dbReference type="PROSITE" id="PS01223">
    <property type="entry name" value="PROA"/>
    <property type="match status" value="1"/>
</dbReference>
<keyword id="KW-0028">Amino-acid biosynthesis</keyword>
<keyword id="KW-0963">Cytoplasm</keyword>
<keyword id="KW-0521">NADP</keyword>
<keyword id="KW-0560">Oxidoreductase</keyword>
<keyword id="KW-0641">Proline biosynthesis</keyword>
<evidence type="ECO:0000255" key="1">
    <source>
        <dbReference type="HAMAP-Rule" id="MF_00412"/>
    </source>
</evidence>
<protein>
    <recommendedName>
        <fullName evidence="1">Gamma-glutamyl phosphate reductase</fullName>
        <shortName evidence="1">GPR</shortName>
        <ecNumber evidence="1">1.2.1.41</ecNumber>
    </recommendedName>
    <alternativeName>
        <fullName evidence="1">Glutamate-5-semialdehyde dehydrogenase</fullName>
    </alternativeName>
    <alternativeName>
        <fullName evidence="1">Glutamyl-gamma-semialdehyde dehydrogenase</fullName>
        <shortName evidence="1">GSA dehydrogenase</shortName>
    </alternativeName>
</protein>